<sequence>MNAFDADITEHADSSGCHPLFRDVPATVEFNKLRKRLLRLTRQAIEDFAMVKPGDRWMVCLSGGKDSYGLLALLLDLKWRGLLPVELLAVNLDQGQPNFPKHILPDFLTRYGIEHRIEYQDTYSIVTDKLPETSTYCSLCSRLRRGNLYRIAREEGCSAIVLGHHREDILETFFMNLFHGGRLAAMPPKLLNDEGDLMVFRPLAYAAEDDLEKFANAMQFPIIPCDLCGSQDGLQRNAMKAMLIDIEKRMPGRKDTMIRALTNVRPSHLLDRKLFDFAGLMANGEKGSDDALW</sequence>
<reference key="1">
    <citation type="journal article" date="2009" name="PLoS ONE">
        <title>Genome degradation in Brucella ovis corresponds with narrowing of its host range and tissue tropism.</title>
        <authorList>
            <person name="Tsolis R.M."/>
            <person name="Seshadri R."/>
            <person name="Santos R.L."/>
            <person name="Sangari F.J."/>
            <person name="Lobo J.M."/>
            <person name="de Jong M.F."/>
            <person name="Ren Q."/>
            <person name="Myers G."/>
            <person name="Brinkac L.M."/>
            <person name="Nelson W.C."/>
            <person name="Deboy R.T."/>
            <person name="Angiuoli S."/>
            <person name="Khouri H."/>
            <person name="Dimitrov G."/>
            <person name="Robinson J.R."/>
            <person name="Mulligan S."/>
            <person name="Walker R.L."/>
            <person name="Elzer P.E."/>
            <person name="Hassan K.A."/>
            <person name="Paulsen I.T."/>
        </authorList>
    </citation>
    <scope>NUCLEOTIDE SEQUENCE [LARGE SCALE GENOMIC DNA]</scope>
    <source>
        <strain>ATCC 25840 / 63/290 / NCTC 10512</strain>
    </source>
</reference>
<protein>
    <recommendedName>
        <fullName evidence="1">tRNA-cytidine(32) 2-sulfurtransferase</fullName>
        <ecNumber evidence="1">2.8.1.-</ecNumber>
    </recommendedName>
    <alternativeName>
        <fullName evidence="1">Two-thiocytidine biosynthesis protein A</fullName>
    </alternativeName>
    <alternativeName>
        <fullName evidence="1">tRNA 2-thiocytidine biosynthesis protein TtcA</fullName>
    </alternativeName>
</protein>
<gene>
    <name evidence="1" type="primary">ttcA</name>
    <name type="ordered locus">BOV_0824</name>
</gene>
<dbReference type="EC" id="2.8.1.-" evidence="1"/>
<dbReference type="EMBL" id="CP000708">
    <property type="protein sequence ID" value="ABQ60076.1"/>
    <property type="molecule type" value="Genomic_DNA"/>
</dbReference>
<dbReference type="RefSeq" id="WP_002969416.1">
    <property type="nucleotide sequence ID" value="NC_009505.1"/>
</dbReference>
<dbReference type="SMR" id="A5VQ10"/>
<dbReference type="GeneID" id="93016786"/>
<dbReference type="KEGG" id="bov:BOV_0824"/>
<dbReference type="HOGENOM" id="CLU_026481_0_0_5"/>
<dbReference type="PhylomeDB" id="A5VQ10"/>
<dbReference type="Proteomes" id="UP000006383">
    <property type="component" value="Chromosome I"/>
</dbReference>
<dbReference type="GO" id="GO:0005737">
    <property type="term" value="C:cytoplasm"/>
    <property type="evidence" value="ECO:0007669"/>
    <property type="project" value="UniProtKB-SubCell"/>
</dbReference>
<dbReference type="GO" id="GO:0051539">
    <property type="term" value="F:4 iron, 4 sulfur cluster binding"/>
    <property type="evidence" value="ECO:0007669"/>
    <property type="project" value="UniProtKB-UniRule"/>
</dbReference>
<dbReference type="GO" id="GO:0005524">
    <property type="term" value="F:ATP binding"/>
    <property type="evidence" value="ECO:0007669"/>
    <property type="project" value="UniProtKB-UniRule"/>
</dbReference>
<dbReference type="GO" id="GO:0000287">
    <property type="term" value="F:magnesium ion binding"/>
    <property type="evidence" value="ECO:0007669"/>
    <property type="project" value="UniProtKB-UniRule"/>
</dbReference>
<dbReference type="GO" id="GO:0016783">
    <property type="term" value="F:sulfurtransferase activity"/>
    <property type="evidence" value="ECO:0007669"/>
    <property type="project" value="UniProtKB-UniRule"/>
</dbReference>
<dbReference type="GO" id="GO:0000049">
    <property type="term" value="F:tRNA binding"/>
    <property type="evidence" value="ECO:0007669"/>
    <property type="project" value="UniProtKB-KW"/>
</dbReference>
<dbReference type="GO" id="GO:0034227">
    <property type="term" value="P:tRNA thio-modification"/>
    <property type="evidence" value="ECO:0007669"/>
    <property type="project" value="UniProtKB-UniRule"/>
</dbReference>
<dbReference type="CDD" id="cd24138">
    <property type="entry name" value="TtcA-like"/>
    <property type="match status" value="1"/>
</dbReference>
<dbReference type="Gene3D" id="3.40.50.620">
    <property type="entry name" value="HUPs"/>
    <property type="match status" value="1"/>
</dbReference>
<dbReference type="HAMAP" id="MF_01850">
    <property type="entry name" value="TtcA"/>
    <property type="match status" value="1"/>
</dbReference>
<dbReference type="InterPro" id="IPR014729">
    <property type="entry name" value="Rossmann-like_a/b/a_fold"/>
</dbReference>
<dbReference type="InterPro" id="IPR011063">
    <property type="entry name" value="TilS/TtcA_N"/>
</dbReference>
<dbReference type="InterPro" id="IPR012089">
    <property type="entry name" value="tRNA_Cyd_32_2_STrfase"/>
</dbReference>
<dbReference type="InterPro" id="IPR035107">
    <property type="entry name" value="tRNA_thiolation_TtcA_Ctu1"/>
</dbReference>
<dbReference type="NCBIfam" id="NF007972">
    <property type="entry name" value="PRK10696.1"/>
    <property type="match status" value="1"/>
</dbReference>
<dbReference type="PANTHER" id="PTHR43686:SF1">
    <property type="entry name" value="AMINOTRAN_5 DOMAIN-CONTAINING PROTEIN"/>
    <property type="match status" value="1"/>
</dbReference>
<dbReference type="PANTHER" id="PTHR43686">
    <property type="entry name" value="SULFURTRANSFERASE-RELATED"/>
    <property type="match status" value="1"/>
</dbReference>
<dbReference type="Pfam" id="PF01171">
    <property type="entry name" value="ATP_bind_3"/>
    <property type="match status" value="1"/>
</dbReference>
<dbReference type="PIRSF" id="PIRSF004976">
    <property type="entry name" value="ATPase_YdaO"/>
    <property type="match status" value="1"/>
</dbReference>
<dbReference type="SUPFAM" id="SSF52402">
    <property type="entry name" value="Adenine nucleotide alpha hydrolases-like"/>
    <property type="match status" value="1"/>
</dbReference>
<accession>A5VQ10</accession>
<name>TTCA_BRUO2</name>
<feature type="chain" id="PRO_0000348676" description="tRNA-cytidine(32) 2-sulfurtransferase">
    <location>
        <begin position="1"/>
        <end position="293"/>
    </location>
</feature>
<feature type="short sequence motif" description="PP-loop motif" evidence="1">
    <location>
        <begin position="62"/>
        <end position="67"/>
    </location>
</feature>
<feature type="binding site" evidence="1">
    <location>
        <position position="137"/>
    </location>
    <ligand>
        <name>[4Fe-4S] cluster</name>
        <dbReference type="ChEBI" id="CHEBI:49883"/>
    </ligand>
</feature>
<feature type="binding site" evidence="1">
    <location>
        <position position="140"/>
    </location>
    <ligand>
        <name>[4Fe-4S] cluster</name>
        <dbReference type="ChEBI" id="CHEBI:49883"/>
    </ligand>
</feature>
<feature type="binding site" evidence="1">
    <location>
        <position position="228"/>
    </location>
    <ligand>
        <name>[4Fe-4S] cluster</name>
        <dbReference type="ChEBI" id="CHEBI:49883"/>
    </ligand>
</feature>
<evidence type="ECO:0000255" key="1">
    <source>
        <dbReference type="HAMAP-Rule" id="MF_01850"/>
    </source>
</evidence>
<organism>
    <name type="scientific">Brucella ovis (strain ATCC 25840 / 63/290 / NCTC 10512)</name>
    <dbReference type="NCBI Taxonomy" id="444178"/>
    <lineage>
        <taxon>Bacteria</taxon>
        <taxon>Pseudomonadati</taxon>
        <taxon>Pseudomonadota</taxon>
        <taxon>Alphaproteobacteria</taxon>
        <taxon>Hyphomicrobiales</taxon>
        <taxon>Brucellaceae</taxon>
        <taxon>Brucella/Ochrobactrum group</taxon>
        <taxon>Brucella</taxon>
    </lineage>
</organism>
<keyword id="KW-0004">4Fe-4S</keyword>
<keyword id="KW-0067">ATP-binding</keyword>
<keyword id="KW-0963">Cytoplasm</keyword>
<keyword id="KW-0408">Iron</keyword>
<keyword id="KW-0411">Iron-sulfur</keyword>
<keyword id="KW-0460">Magnesium</keyword>
<keyword id="KW-0479">Metal-binding</keyword>
<keyword id="KW-0547">Nucleotide-binding</keyword>
<keyword id="KW-0694">RNA-binding</keyword>
<keyword id="KW-0808">Transferase</keyword>
<keyword id="KW-0819">tRNA processing</keyword>
<keyword id="KW-0820">tRNA-binding</keyword>
<comment type="function">
    <text evidence="1">Catalyzes the ATP-dependent 2-thiolation of cytidine in position 32 of tRNA, to form 2-thiocytidine (s(2)C32). The sulfur atoms are provided by the cysteine/cysteine desulfurase (IscS) system.</text>
</comment>
<comment type="catalytic activity">
    <reaction evidence="1">
        <text>cytidine(32) in tRNA + S-sulfanyl-L-cysteinyl-[cysteine desulfurase] + AH2 + ATP = 2-thiocytidine(32) in tRNA + L-cysteinyl-[cysteine desulfurase] + A + AMP + diphosphate + H(+)</text>
        <dbReference type="Rhea" id="RHEA:57048"/>
        <dbReference type="Rhea" id="RHEA-COMP:10288"/>
        <dbReference type="Rhea" id="RHEA-COMP:12157"/>
        <dbReference type="Rhea" id="RHEA-COMP:12158"/>
        <dbReference type="Rhea" id="RHEA-COMP:14821"/>
        <dbReference type="ChEBI" id="CHEBI:13193"/>
        <dbReference type="ChEBI" id="CHEBI:15378"/>
        <dbReference type="ChEBI" id="CHEBI:17499"/>
        <dbReference type="ChEBI" id="CHEBI:29950"/>
        <dbReference type="ChEBI" id="CHEBI:30616"/>
        <dbReference type="ChEBI" id="CHEBI:33019"/>
        <dbReference type="ChEBI" id="CHEBI:61963"/>
        <dbReference type="ChEBI" id="CHEBI:82748"/>
        <dbReference type="ChEBI" id="CHEBI:141453"/>
        <dbReference type="ChEBI" id="CHEBI:456215"/>
    </reaction>
    <physiologicalReaction direction="left-to-right" evidence="1">
        <dbReference type="Rhea" id="RHEA:57049"/>
    </physiologicalReaction>
</comment>
<comment type="cofactor">
    <cofactor evidence="1">
        <name>Mg(2+)</name>
        <dbReference type="ChEBI" id="CHEBI:18420"/>
    </cofactor>
</comment>
<comment type="cofactor">
    <cofactor evidence="1">
        <name>[4Fe-4S] cluster</name>
        <dbReference type="ChEBI" id="CHEBI:49883"/>
    </cofactor>
    <text evidence="1">Binds 1 [4Fe-4S] cluster per subunit. The cluster is chelated by three Cys residues, the fourth Fe has a free coordination site that may bind a sulfur atom transferred from the persulfide of IscS.</text>
</comment>
<comment type="pathway">
    <text evidence="1">tRNA modification.</text>
</comment>
<comment type="subunit">
    <text evidence="1">Homodimer.</text>
</comment>
<comment type="subcellular location">
    <subcellularLocation>
        <location evidence="1">Cytoplasm</location>
    </subcellularLocation>
</comment>
<comment type="miscellaneous">
    <text evidence="1">The thiolation reaction likely consists of two steps: a first activation step by ATP to form an adenylated intermediate of the target base of tRNA, and a second nucleophilic substitution step of the sulfur (S) atom supplied by the hydrosulfide attached to the Fe-S cluster.</text>
</comment>
<comment type="similarity">
    <text evidence="1">Belongs to the TtcA family.</text>
</comment>
<proteinExistence type="inferred from homology"/>